<comment type="similarity">
    <text evidence="1">To M.tuberculosis Rv1738.</text>
</comment>
<gene>
    <name type="ordered locus">Rv2632c</name>
    <name type="ORF">MTCY441.02c</name>
</gene>
<evidence type="ECO:0000305" key="1"/>
<evidence type="ECO:0007829" key="2">
    <source>
        <dbReference type="PDB" id="2FGG"/>
    </source>
</evidence>
<dbReference type="EMBL" id="AL123456">
    <property type="protein sequence ID" value="CCP45430.1"/>
    <property type="molecule type" value="Genomic_DNA"/>
</dbReference>
<dbReference type="PIR" id="D70963">
    <property type="entry name" value="D70963"/>
</dbReference>
<dbReference type="RefSeq" id="NP_217148.1">
    <property type="nucleotide sequence ID" value="NC_000962.3"/>
</dbReference>
<dbReference type="RefSeq" id="WP_003413619.1">
    <property type="nucleotide sequence ID" value="NZ_NVQJ01000075.1"/>
</dbReference>
<dbReference type="PDB" id="2FGG">
    <property type="method" value="X-ray"/>
    <property type="resolution" value="2.30 A"/>
    <property type="chains" value="A=1-93"/>
</dbReference>
<dbReference type="PDBsum" id="2FGG"/>
<dbReference type="SMR" id="P9WL61"/>
<dbReference type="STRING" id="83332.Rv2632c"/>
<dbReference type="PaxDb" id="83332-Rv2632c"/>
<dbReference type="DNASU" id="887231"/>
<dbReference type="GeneID" id="887231"/>
<dbReference type="KEGG" id="mtu:Rv2632c"/>
<dbReference type="KEGG" id="mtv:RVBD_2632c"/>
<dbReference type="TubercuList" id="Rv2632c"/>
<dbReference type="eggNOG" id="ENOG503351X">
    <property type="taxonomic scope" value="Bacteria"/>
</dbReference>
<dbReference type="InParanoid" id="P9WL61"/>
<dbReference type="OrthoDB" id="4828144at2"/>
<dbReference type="PhylomeDB" id="P9WL61"/>
<dbReference type="EvolutionaryTrace" id="P9WL61"/>
<dbReference type="Proteomes" id="UP000001584">
    <property type="component" value="Chromosome"/>
</dbReference>
<dbReference type="Gene3D" id="3.30.160.240">
    <property type="entry name" value="Rv1738"/>
    <property type="match status" value="1"/>
</dbReference>
<dbReference type="InterPro" id="IPR015057">
    <property type="entry name" value="Rv2632c-like"/>
</dbReference>
<dbReference type="InterPro" id="IPR038070">
    <property type="entry name" value="Rv2632c-like_sf"/>
</dbReference>
<dbReference type="Pfam" id="PF08962">
    <property type="entry name" value="Rv2632c-like"/>
    <property type="match status" value="1"/>
</dbReference>
<dbReference type="SUPFAM" id="SSF143212">
    <property type="entry name" value="Rv2632c-like"/>
    <property type="match status" value="1"/>
</dbReference>
<protein>
    <recommendedName>
        <fullName>Uncharacterized protein Rv2632c</fullName>
    </recommendedName>
</protein>
<feature type="chain" id="PRO_0000104072" description="Uncharacterized protein Rv2632c">
    <location>
        <begin position="1"/>
        <end position="93"/>
    </location>
</feature>
<feature type="strand" evidence="2">
    <location>
        <begin position="14"/>
        <end position="19"/>
    </location>
</feature>
<feature type="strand" evidence="2">
    <location>
        <begin position="24"/>
        <end position="32"/>
    </location>
</feature>
<feature type="strand" evidence="2">
    <location>
        <begin position="35"/>
        <end position="43"/>
    </location>
</feature>
<feature type="strand" evidence="2">
    <location>
        <begin position="47"/>
        <end position="49"/>
    </location>
</feature>
<feature type="helix" evidence="2">
    <location>
        <begin position="54"/>
        <end position="83"/>
    </location>
</feature>
<proteinExistence type="evidence at protein level"/>
<reference key="1">
    <citation type="journal article" date="1998" name="Nature">
        <title>Deciphering the biology of Mycobacterium tuberculosis from the complete genome sequence.</title>
        <authorList>
            <person name="Cole S.T."/>
            <person name="Brosch R."/>
            <person name="Parkhill J."/>
            <person name="Garnier T."/>
            <person name="Churcher C.M."/>
            <person name="Harris D.E."/>
            <person name="Gordon S.V."/>
            <person name="Eiglmeier K."/>
            <person name="Gas S."/>
            <person name="Barry C.E. III"/>
            <person name="Tekaia F."/>
            <person name="Badcock K."/>
            <person name="Basham D."/>
            <person name="Brown D."/>
            <person name="Chillingworth T."/>
            <person name="Connor R."/>
            <person name="Davies R.M."/>
            <person name="Devlin K."/>
            <person name="Feltwell T."/>
            <person name="Gentles S."/>
            <person name="Hamlin N."/>
            <person name="Holroyd S."/>
            <person name="Hornsby T."/>
            <person name="Jagels K."/>
            <person name="Krogh A."/>
            <person name="McLean J."/>
            <person name="Moule S."/>
            <person name="Murphy L.D."/>
            <person name="Oliver S."/>
            <person name="Osborne J."/>
            <person name="Quail M.A."/>
            <person name="Rajandream M.A."/>
            <person name="Rogers J."/>
            <person name="Rutter S."/>
            <person name="Seeger K."/>
            <person name="Skelton S."/>
            <person name="Squares S."/>
            <person name="Squares R."/>
            <person name="Sulston J.E."/>
            <person name="Taylor K."/>
            <person name="Whitehead S."/>
            <person name="Barrell B.G."/>
        </authorList>
    </citation>
    <scope>NUCLEOTIDE SEQUENCE [LARGE SCALE GENOMIC DNA]</scope>
    <source>
        <strain>ATCC 25618 / H37Rv</strain>
    </source>
</reference>
<reference key="2">
    <citation type="journal article" date="2011" name="Mol. Cell. Proteomics">
        <title>Proteogenomic analysis of Mycobacterium tuberculosis by high resolution mass spectrometry.</title>
        <authorList>
            <person name="Kelkar D.S."/>
            <person name="Kumar D."/>
            <person name="Kumar P."/>
            <person name="Balakrishnan L."/>
            <person name="Muthusamy B."/>
            <person name="Yadav A.K."/>
            <person name="Shrivastava P."/>
            <person name="Marimuthu A."/>
            <person name="Anand S."/>
            <person name="Sundaram H."/>
            <person name="Kingsbury R."/>
            <person name="Harsha H.C."/>
            <person name="Nair B."/>
            <person name="Prasad T.S."/>
            <person name="Chauhan D.S."/>
            <person name="Katoch K."/>
            <person name="Katoch V.M."/>
            <person name="Kumar P."/>
            <person name="Chaerkady R."/>
            <person name="Ramachandran S."/>
            <person name="Dash D."/>
            <person name="Pandey A."/>
        </authorList>
    </citation>
    <scope>IDENTIFICATION BY MASS SPECTROMETRY [LARGE SCALE ANALYSIS]</scope>
    <source>
        <strain>ATCC 25618 / H37Rv</strain>
    </source>
</reference>
<keyword id="KW-0002">3D-structure</keyword>
<keyword id="KW-1185">Reference proteome</keyword>
<sequence>MTDSEHVGKTCQIDVLIEEHDERTRAKARLSWAGRQMVGVGLARLDPADEPVAQIGDELAIARALSDLANQLFALTSSDIEASTHQPVTGLHH</sequence>
<accession>P9WL61</accession>
<accession>L0TA76</accession>
<accession>P65033</accession>
<accession>P71931</accession>
<organism>
    <name type="scientific">Mycobacterium tuberculosis (strain ATCC 25618 / H37Rv)</name>
    <dbReference type="NCBI Taxonomy" id="83332"/>
    <lineage>
        <taxon>Bacteria</taxon>
        <taxon>Bacillati</taxon>
        <taxon>Actinomycetota</taxon>
        <taxon>Actinomycetes</taxon>
        <taxon>Mycobacteriales</taxon>
        <taxon>Mycobacteriaceae</taxon>
        <taxon>Mycobacterium</taxon>
        <taxon>Mycobacterium tuberculosis complex</taxon>
    </lineage>
</organism>
<name>Y2632_MYCTU</name>